<keyword id="KW-0342">GTP-binding</keyword>
<keyword id="KW-0547">Nucleotide-binding</keyword>
<keyword id="KW-0677">Repeat</keyword>
<keyword id="KW-0690">Ribosome biogenesis</keyword>
<protein>
    <recommendedName>
        <fullName evidence="1">GTPase Der</fullName>
    </recommendedName>
    <alternativeName>
        <fullName evidence="1">GTP-binding protein EngA</fullName>
    </alternativeName>
</protein>
<proteinExistence type="inferred from homology"/>
<sequence>MAGAMVSIVGRPNVGKSTLFNKIMGKRISIVEDKPGVTRDRIYGNAEWLDKKFILVDTGGLDPNAEDILFSKVRLQVEAAIDTSDVILFLVDAKEGLMPEDEEIANILRRAKKEVILVCNKVDSFKEMPPTYYDFFSLGLGNPIPISASNGLGIGELLDEVVKRLPQEELEYTEETIKIAVIGKPNVGKSSLVNKILGEERVIVSNIPGTTRDAIDTPFSKDGKNYVLIDTAGIRRKSRISESIERYSVLRALAAIERSDICLLMIDATEGPTEQDTKIAGYAFENGKGIIIVVNKWDAIKKDNNTVNEYTKMVREKLSFISFAPILFISAKTGQRVHRVLETVDKVWEEYNKRITTGLLNNVLNEAILMFPPPADKGKPLKVYYTSQVGIKPPSFVVFVNEPELMHFSYLRFIENTLRQNFGFEGVPIVISTKKRGEN</sequence>
<feature type="chain" id="PRO_1000099173" description="GTPase Der">
    <location>
        <begin position="1"/>
        <end position="439"/>
    </location>
</feature>
<feature type="domain" description="EngA-type G 1">
    <location>
        <begin position="4"/>
        <end position="169"/>
    </location>
</feature>
<feature type="domain" description="EngA-type G 2">
    <location>
        <begin position="177"/>
        <end position="352"/>
    </location>
</feature>
<feature type="domain" description="KH-like" evidence="1">
    <location>
        <begin position="353"/>
        <end position="437"/>
    </location>
</feature>
<feature type="binding site" evidence="1">
    <location>
        <begin position="10"/>
        <end position="17"/>
    </location>
    <ligand>
        <name>GTP</name>
        <dbReference type="ChEBI" id="CHEBI:37565"/>
        <label>1</label>
    </ligand>
</feature>
<feature type="binding site" evidence="1">
    <location>
        <begin position="57"/>
        <end position="61"/>
    </location>
    <ligand>
        <name>GTP</name>
        <dbReference type="ChEBI" id="CHEBI:37565"/>
        <label>1</label>
    </ligand>
</feature>
<feature type="binding site" evidence="1">
    <location>
        <begin position="120"/>
        <end position="123"/>
    </location>
    <ligand>
        <name>GTP</name>
        <dbReference type="ChEBI" id="CHEBI:37565"/>
        <label>1</label>
    </ligand>
</feature>
<feature type="binding site" evidence="1">
    <location>
        <begin position="183"/>
        <end position="190"/>
    </location>
    <ligand>
        <name>GTP</name>
        <dbReference type="ChEBI" id="CHEBI:37565"/>
        <label>2</label>
    </ligand>
</feature>
<feature type="binding site" evidence="1">
    <location>
        <begin position="230"/>
        <end position="234"/>
    </location>
    <ligand>
        <name>GTP</name>
        <dbReference type="ChEBI" id="CHEBI:37565"/>
        <label>2</label>
    </ligand>
</feature>
<feature type="binding site" evidence="1">
    <location>
        <begin position="295"/>
        <end position="298"/>
    </location>
    <ligand>
        <name>GTP</name>
        <dbReference type="ChEBI" id="CHEBI:37565"/>
        <label>2</label>
    </ligand>
</feature>
<accession>B0K3E4</accession>
<evidence type="ECO:0000255" key="1">
    <source>
        <dbReference type="HAMAP-Rule" id="MF_00195"/>
    </source>
</evidence>
<gene>
    <name evidence="1" type="primary">der</name>
    <name type="synonym">engA</name>
    <name type="ordered locus">Teth514_1983</name>
</gene>
<name>DER_THEPX</name>
<organism>
    <name type="scientific">Thermoanaerobacter sp. (strain X514)</name>
    <dbReference type="NCBI Taxonomy" id="399726"/>
    <lineage>
        <taxon>Bacteria</taxon>
        <taxon>Bacillati</taxon>
        <taxon>Bacillota</taxon>
        <taxon>Clostridia</taxon>
        <taxon>Thermoanaerobacterales</taxon>
        <taxon>Thermoanaerobacteraceae</taxon>
        <taxon>Thermoanaerobacter</taxon>
    </lineage>
</organism>
<comment type="function">
    <text evidence="1">GTPase that plays an essential role in the late steps of ribosome biogenesis.</text>
</comment>
<comment type="subunit">
    <text evidence="1">Associates with the 50S ribosomal subunit.</text>
</comment>
<comment type="similarity">
    <text evidence="1">Belongs to the TRAFAC class TrmE-Era-EngA-EngB-Septin-like GTPase superfamily. EngA (Der) GTPase family.</text>
</comment>
<reference key="1">
    <citation type="submission" date="2008-01" db="EMBL/GenBank/DDBJ databases">
        <title>Complete sequence of Thermoanaerobacter sp. X514.</title>
        <authorList>
            <consortium name="US DOE Joint Genome Institute"/>
            <person name="Copeland A."/>
            <person name="Lucas S."/>
            <person name="Lapidus A."/>
            <person name="Barry K."/>
            <person name="Glavina del Rio T."/>
            <person name="Dalin E."/>
            <person name="Tice H."/>
            <person name="Pitluck S."/>
            <person name="Bruce D."/>
            <person name="Goodwin L."/>
            <person name="Saunders E."/>
            <person name="Brettin T."/>
            <person name="Detter J.C."/>
            <person name="Han C."/>
            <person name="Schmutz J."/>
            <person name="Larimer F."/>
            <person name="Land M."/>
            <person name="Hauser L."/>
            <person name="Kyrpides N."/>
            <person name="Kim E."/>
            <person name="Hemme C."/>
            <person name="Fields M.W."/>
            <person name="He Z."/>
            <person name="Zhou J."/>
            <person name="Richardson P."/>
        </authorList>
    </citation>
    <scope>NUCLEOTIDE SEQUENCE [LARGE SCALE GENOMIC DNA]</scope>
    <source>
        <strain>X514</strain>
    </source>
</reference>
<dbReference type="EMBL" id="CP000923">
    <property type="protein sequence ID" value="ABY93255.1"/>
    <property type="molecule type" value="Genomic_DNA"/>
</dbReference>
<dbReference type="RefSeq" id="WP_009052532.1">
    <property type="nucleotide sequence ID" value="NC_010320.1"/>
</dbReference>
<dbReference type="SMR" id="B0K3E4"/>
<dbReference type="KEGG" id="tex:Teth514_1983"/>
<dbReference type="HOGENOM" id="CLU_016077_6_2_9"/>
<dbReference type="Proteomes" id="UP000002155">
    <property type="component" value="Chromosome"/>
</dbReference>
<dbReference type="GO" id="GO:0005525">
    <property type="term" value="F:GTP binding"/>
    <property type="evidence" value="ECO:0007669"/>
    <property type="project" value="UniProtKB-UniRule"/>
</dbReference>
<dbReference type="GO" id="GO:0043022">
    <property type="term" value="F:ribosome binding"/>
    <property type="evidence" value="ECO:0007669"/>
    <property type="project" value="TreeGrafter"/>
</dbReference>
<dbReference type="GO" id="GO:0042254">
    <property type="term" value="P:ribosome biogenesis"/>
    <property type="evidence" value="ECO:0007669"/>
    <property type="project" value="UniProtKB-KW"/>
</dbReference>
<dbReference type="CDD" id="cd01894">
    <property type="entry name" value="EngA1"/>
    <property type="match status" value="1"/>
</dbReference>
<dbReference type="CDD" id="cd01895">
    <property type="entry name" value="EngA2"/>
    <property type="match status" value="1"/>
</dbReference>
<dbReference type="FunFam" id="3.30.300.20:FF:000004">
    <property type="entry name" value="GTPase Der"/>
    <property type="match status" value="1"/>
</dbReference>
<dbReference type="FunFam" id="3.40.50.300:FF:000040">
    <property type="entry name" value="GTPase Der"/>
    <property type="match status" value="1"/>
</dbReference>
<dbReference type="FunFam" id="3.40.50.300:FF:000057">
    <property type="entry name" value="GTPase Der"/>
    <property type="match status" value="1"/>
</dbReference>
<dbReference type="Gene3D" id="3.30.300.20">
    <property type="match status" value="1"/>
</dbReference>
<dbReference type="Gene3D" id="3.40.50.300">
    <property type="entry name" value="P-loop containing nucleotide triphosphate hydrolases"/>
    <property type="match status" value="2"/>
</dbReference>
<dbReference type="HAMAP" id="MF_00195">
    <property type="entry name" value="GTPase_Der"/>
    <property type="match status" value="1"/>
</dbReference>
<dbReference type="InterPro" id="IPR031166">
    <property type="entry name" value="G_ENGA"/>
</dbReference>
<dbReference type="InterPro" id="IPR006073">
    <property type="entry name" value="GTP-bd"/>
</dbReference>
<dbReference type="InterPro" id="IPR016484">
    <property type="entry name" value="GTPase_Der"/>
</dbReference>
<dbReference type="InterPro" id="IPR032859">
    <property type="entry name" value="KH_dom-like"/>
</dbReference>
<dbReference type="InterPro" id="IPR015946">
    <property type="entry name" value="KH_dom-like_a/b"/>
</dbReference>
<dbReference type="InterPro" id="IPR027417">
    <property type="entry name" value="P-loop_NTPase"/>
</dbReference>
<dbReference type="InterPro" id="IPR005225">
    <property type="entry name" value="Small_GTP-bd"/>
</dbReference>
<dbReference type="NCBIfam" id="TIGR03594">
    <property type="entry name" value="GTPase_EngA"/>
    <property type="match status" value="1"/>
</dbReference>
<dbReference type="NCBIfam" id="TIGR00231">
    <property type="entry name" value="small_GTP"/>
    <property type="match status" value="2"/>
</dbReference>
<dbReference type="PANTHER" id="PTHR43834">
    <property type="entry name" value="GTPASE DER"/>
    <property type="match status" value="1"/>
</dbReference>
<dbReference type="PANTHER" id="PTHR43834:SF6">
    <property type="entry name" value="GTPASE DER"/>
    <property type="match status" value="1"/>
</dbReference>
<dbReference type="Pfam" id="PF14714">
    <property type="entry name" value="KH_dom-like"/>
    <property type="match status" value="1"/>
</dbReference>
<dbReference type="Pfam" id="PF01926">
    <property type="entry name" value="MMR_HSR1"/>
    <property type="match status" value="2"/>
</dbReference>
<dbReference type="PIRSF" id="PIRSF006485">
    <property type="entry name" value="GTP-binding_EngA"/>
    <property type="match status" value="1"/>
</dbReference>
<dbReference type="PRINTS" id="PR00326">
    <property type="entry name" value="GTP1OBG"/>
</dbReference>
<dbReference type="SUPFAM" id="SSF52540">
    <property type="entry name" value="P-loop containing nucleoside triphosphate hydrolases"/>
    <property type="match status" value="2"/>
</dbReference>
<dbReference type="PROSITE" id="PS51712">
    <property type="entry name" value="G_ENGA"/>
    <property type="match status" value="2"/>
</dbReference>